<reference key="1">
    <citation type="submission" date="1998-02" db="EMBL/GenBank/DDBJ databases">
        <title>Sirohaem synthase from Neisseria meningitidis.</title>
        <authorList>
            <person name="McVeigh T."/>
            <person name="Wilkie S.E."/>
            <person name="Woodcock S.C."/>
            <person name="Mortuza G."/>
            <person name="Peters S.E."/>
            <person name="Warren M.J."/>
        </authorList>
    </citation>
    <scope>NUCLEOTIDE SEQUENCE [GENOMIC DNA]</scope>
    <source>
        <strain>ATCC BAA-335 / MC58</strain>
    </source>
</reference>
<reference key="2">
    <citation type="journal article" date="2000" name="Science">
        <title>Complete genome sequence of Neisseria meningitidis serogroup B strain MC58.</title>
        <authorList>
            <person name="Tettelin H."/>
            <person name="Saunders N.J."/>
            <person name="Heidelberg J.F."/>
            <person name="Jeffries A.C."/>
            <person name="Nelson K.E."/>
            <person name="Eisen J.A."/>
            <person name="Ketchum K.A."/>
            <person name="Hood D.W."/>
            <person name="Peden J.F."/>
            <person name="Dodson R.J."/>
            <person name="Nelson W.C."/>
            <person name="Gwinn M.L."/>
            <person name="DeBoy R.T."/>
            <person name="Peterson J.D."/>
            <person name="Hickey E.K."/>
            <person name="Haft D.H."/>
            <person name="Salzberg S.L."/>
            <person name="White O."/>
            <person name="Fleischmann R.D."/>
            <person name="Dougherty B.A."/>
            <person name="Mason T.M."/>
            <person name="Ciecko A."/>
            <person name="Parksey D.S."/>
            <person name="Blair E."/>
            <person name="Cittone H."/>
            <person name="Clark E.B."/>
            <person name="Cotton M.D."/>
            <person name="Utterback T.R."/>
            <person name="Khouri H.M."/>
            <person name="Qin H."/>
            <person name="Vamathevan J.J."/>
            <person name="Gill J."/>
            <person name="Scarlato V."/>
            <person name="Masignani V."/>
            <person name="Pizza M."/>
            <person name="Grandi G."/>
            <person name="Sun L."/>
            <person name="Smith H.O."/>
            <person name="Fraser C.M."/>
            <person name="Moxon E.R."/>
            <person name="Rappuoli R."/>
            <person name="Venter J.C."/>
        </authorList>
    </citation>
    <scope>NUCLEOTIDE SEQUENCE [LARGE SCALE GENOMIC DNA]</scope>
    <source>
        <strain>ATCC BAA-335 / MC58</strain>
    </source>
</reference>
<feature type="chain" id="PRO_0000150382" description="Siroheme synthase">
    <location>
        <begin position="1"/>
        <end position="483"/>
    </location>
</feature>
<feature type="region of interest" description="Precorrin-2 dehydrogenase /sirohydrochlorin ferrochelatase" evidence="1">
    <location>
        <begin position="1"/>
        <end position="203"/>
    </location>
</feature>
<feature type="region of interest" description="Uroporphyrinogen-III C-methyltransferase" evidence="1">
    <location>
        <begin position="217"/>
        <end position="483"/>
    </location>
</feature>
<feature type="active site" description="Proton acceptor" evidence="1">
    <location>
        <position position="249"/>
    </location>
</feature>
<feature type="active site" description="Proton donor" evidence="1">
    <location>
        <position position="271"/>
    </location>
</feature>
<feature type="binding site" evidence="1">
    <location>
        <begin position="22"/>
        <end position="23"/>
    </location>
    <ligand>
        <name>NAD(+)</name>
        <dbReference type="ChEBI" id="CHEBI:57540"/>
    </ligand>
</feature>
<feature type="binding site" evidence="1">
    <location>
        <begin position="43"/>
        <end position="44"/>
    </location>
    <ligand>
        <name>NAD(+)</name>
        <dbReference type="ChEBI" id="CHEBI:57540"/>
    </ligand>
</feature>
<feature type="binding site" evidence="1">
    <location>
        <position position="226"/>
    </location>
    <ligand>
        <name>S-adenosyl-L-methionine</name>
        <dbReference type="ChEBI" id="CHEBI:59789"/>
    </ligand>
</feature>
<feature type="binding site" evidence="1">
    <location>
        <begin position="302"/>
        <end position="304"/>
    </location>
    <ligand>
        <name>S-adenosyl-L-methionine</name>
        <dbReference type="ChEBI" id="CHEBI:59789"/>
    </ligand>
</feature>
<feature type="binding site" evidence="1">
    <location>
        <position position="307"/>
    </location>
    <ligand>
        <name>S-adenosyl-L-methionine</name>
        <dbReference type="ChEBI" id="CHEBI:59789"/>
    </ligand>
</feature>
<feature type="binding site" evidence="1">
    <location>
        <begin position="332"/>
        <end position="333"/>
    </location>
    <ligand>
        <name>S-adenosyl-L-methionine</name>
        <dbReference type="ChEBI" id="CHEBI:59789"/>
    </ligand>
</feature>
<feature type="binding site" evidence="1">
    <location>
        <position position="384"/>
    </location>
    <ligand>
        <name>S-adenosyl-L-methionine</name>
        <dbReference type="ChEBI" id="CHEBI:59789"/>
    </ligand>
</feature>
<feature type="binding site" evidence="1">
    <location>
        <position position="413"/>
    </location>
    <ligand>
        <name>S-adenosyl-L-methionine</name>
        <dbReference type="ChEBI" id="CHEBI:59789"/>
    </ligand>
</feature>
<feature type="modified residue" description="Phosphoserine" evidence="1">
    <location>
        <position position="128"/>
    </location>
</feature>
<feature type="sequence conflict" description="In Ref. 1; CAA71251." evidence="2" ref="1">
    <original>GLNAGQRAA</original>
    <variation>D</variation>
    <location>
        <begin position="475"/>
        <end position="483"/>
    </location>
</feature>
<evidence type="ECO:0000255" key="1">
    <source>
        <dbReference type="HAMAP-Rule" id="MF_01646"/>
    </source>
</evidence>
<evidence type="ECO:0000305" key="2"/>
<proteinExistence type="inferred from homology"/>
<keyword id="KW-0169">Cobalamin biosynthesis</keyword>
<keyword id="KW-0456">Lyase</keyword>
<keyword id="KW-0489">Methyltransferase</keyword>
<keyword id="KW-0511">Multifunctional enzyme</keyword>
<keyword id="KW-0520">NAD</keyword>
<keyword id="KW-0560">Oxidoreductase</keyword>
<keyword id="KW-0597">Phosphoprotein</keyword>
<keyword id="KW-0627">Porphyrin biosynthesis</keyword>
<keyword id="KW-1185">Reference proteome</keyword>
<keyword id="KW-0949">S-adenosyl-L-methionine</keyword>
<keyword id="KW-0808">Transferase</keyword>
<organism>
    <name type="scientific">Neisseria meningitidis serogroup B (strain ATCC BAA-335 / MC58)</name>
    <dbReference type="NCBI Taxonomy" id="122586"/>
    <lineage>
        <taxon>Bacteria</taxon>
        <taxon>Pseudomonadati</taxon>
        <taxon>Pseudomonadota</taxon>
        <taxon>Betaproteobacteria</taxon>
        <taxon>Neisseriales</taxon>
        <taxon>Neisseriaceae</taxon>
        <taxon>Neisseria</taxon>
    </lineage>
</organism>
<accession>P95370</accession>
<accession>Q9JQK6</accession>
<gene>
    <name evidence="1" type="primary">cysG</name>
    <name type="synonym">cysG1</name>
    <name type="ordered locus">NMB1156</name>
</gene>
<gene>
    <name evidence="1" type="primary">cysG2</name>
    <name type="ordered locus">NMB1194</name>
</gene>
<sequence>MNYFPIFANLAGRPVLVVGGGAVAARKISLLLKAGAEVRVAAKHLNAELSALAAENKILWLAEEFRAEHIRTVFLIIAASSDQALNRRVFHLAESCQKPVNVVDDRDHCSFIFPSVIDRNPVQIAVSSSGSAPVLARLLRERLEALLPPSLGDMAEISGRWRDAVKGKLKSVTERRRFWEKQFNGRFAALVKNRQNTLAERELAGQLEQSRQNDQGGSVSLVGAGPGDAGLLTLKGLQEIQQADVVLYDALVSDGILSLVRRDAERIFVGKRARGERTPQEDTNALMVRLAREGRRVVRLKGGDPFVFGRGGEELETLARHQIPFSVVPGITAAVGATAYAGIPLTHRDYAQSAVFVTGHRKADAPDIEWQTLARSRQTLVIYMGALKAALIAERLQQHGRSPDTPAAVISQGTLPAQKTATGTLANLAELAETAPNPALIVIGEVVGLHEKLAWFGENGEGENRVGQTYPALGGLNAGQRAA</sequence>
<comment type="function">
    <text evidence="1">Multifunctional enzyme that catalyzes the SAM-dependent methylations of uroporphyrinogen III at position C-2 and C-7 to form precorrin-2 via precorrin-1. Then it catalyzes the NAD-dependent ring dehydrogenation of precorrin-2 to yield sirohydrochlorin. Finally, it catalyzes the ferrochelation of sirohydrochlorin to yield siroheme.</text>
</comment>
<comment type="catalytic activity">
    <reaction evidence="1">
        <text>uroporphyrinogen III + 2 S-adenosyl-L-methionine = precorrin-2 + 2 S-adenosyl-L-homocysteine + H(+)</text>
        <dbReference type="Rhea" id="RHEA:32459"/>
        <dbReference type="ChEBI" id="CHEBI:15378"/>
        <dbReference type="ChEBI" id="CHEBI:57308"/>
        <dbReference type="ChEBI" id="CHEBI:57856"/>
        <dbReference type="ChEBI" id="CHEBI:58827"/>
        <dbReference type="ChEBI" id="CHEBI:59789"/>
        <dbReference type="EC" id="2.1.1.107"/>
    </reaction>
</comment>
<comment type="catalytic activity">
    <reaction evidence="1">
        <text>precorrin-2 + NAD(+) = sirohydrochlorin + NADH + 2 H(+)</text>
        <dbReference type="Rhea" id="RHEA:15613"/>
        <dbReference type="ChEBI" id="CHEBI:15378"/>
        <dbReference type="ChEBI" id="CHEBI:57540"/>
        <dbReference type="ChEBI" id="CHEBI:57945"/>
        <dbReference type="ChEBI" id="CHEBI:58351"/>
        <dbReference type="ChEBI" id="CHEBI:58827"/>
        <dbReference type="EC" id="1.3.1.76"/>
    </reaction>
</comment>
<comment type="catalytic activity">
    <reaction evidence="1">
        <text>siroheme + 2 H(+) = sirohydrochlorin + Fe(2+)</text>
        <dbReference type="Rhea" id="RHEA:24360"/>
        <dbReference type="ChEBI" id="CHEBI:15378"/>
        <dbReference type="ChEBI" id="CHEBI:29033"/>
        <dbReference type="ChEBI" id="CHEBI:58351"/>
        <dbReference type="ChEBI" id="CHEBI:60052"/>
        <dbReference type="EC" id="4.99.1.4"/>
    </reaction>
</comment>
<comment type="pathway">
    <text evidence="1">Cofactor biosynthesis; adenosylcobalamin biosynthesis; precorrin-2 from uroporphyrinogen III: step 1/1.</text>
</comment>
<comment type="pathway">
    <text evidence="1">Cofactor biosynthesis; adenosylcobalamin biosynthesis; sirohydrochlorin from precorrin-2: step 1/1.</text>
</comment>
<comment type="pathway">
    <text evidence="1">Porphyrin-containing compound metabolism; siroheme biosynthesis; precorrin-2 from uroporphyrinogen III: step 1/1.</text>
</comment>
<comment type="pathway">
    <text evidence="1">Porphyrin-containing compound metabolism; siroheme biosynthesis; siroheme from sirohydrochlorin: step 1/1.</text>
</comment>
<comment type="pathway">
    <text evidence="1">Porphyrin-containing compound metabolism; siroheme biosynthesis; sirohydrochlorin from precorrin-2: step 1/1.</text>
</comment>
<comment type="similarity">
    <text evidence="1">In the N-terminal section; belongs to the precorrin-2 dehydrogenase / sirohydrochlorin ferrochelatase family.</text>
</comment>
<comment type="similarity">
    <text evidence="1">In the C-terminal section; belongs to the precorrin methyltransferase family.</text>
</comment>
<protein>
    <recommendedName>
        <fullName evidence="1">Siroheme synthase</fullName>
    </recommendedName>
    <domain>
        <recommendedName>
            <fullName evidence="1">Uroporphyrinogen-III C-methyltransferase</fullName>
            <shortName evidence="1">Urogen III methylase</shortName>
            <ecNumber evidence="1">2.1.1.107</ecNumber>
        </recommendedName>
        <alternativeName>
            <fullName evidence="1">SUMT</fullName>
        </alternativeName>
        <alternativeName>
            <fullName evidence="1">Uroporphyrinogen III methylase</fullName>
            <shortName evidence="1">UROM</shortName>
        </alternativeName>
    </domain>
    <domain>
        <recommendedName>
            <fullName evidence="1">Precorrin-2 dehydrogenase</fullName>
            <ecNumber evidence="1">1.3.1.76</ecNumber>
        </recommendedName>
    </domain>
    <domain>
        <recommendedName>
            <fullName evidence="1">Sirohydrochlorin ferrochelatase</fullName>
            <ecNumber evidence="1">4.99.1.4</ecNumber>
        </recommendedName>
    </domain>
</protein>
<dbReference type="EC" id="2.1.1.107" evidence="1"/>
<dbReference type="EC" id="1.3.1.76" evidence="1"/>
<dbReference type="EC" id="4.99.1.4" evidence="1"/>
<dbReference type="EMBL" id="Y10177">
    <property type="protein sequence ID" value="CAA71251.1"/>
    <property type="molecule type" value="Genomic_DNA"/>
</dbReference>
<dbReference type="EMBL" id="AE002098">
    <property type="protein sequence ID" value="AAF41542.1"/>
    <property type="molecule type" value="Genomic_DNA"/>
</dbReference>
<dbReference type="EMBL" id="AE002098">
    <property type="protein sequence ID" value="AAF41577.1"/>
    <property type="molecule type" value="Genomic_DNA"/>
</dbReference>
<dbReference type="PIR" id="D81111">
    <property type="entry name" value="D81111"/>
</dbReference>
<dbReference type="PIR" id="T46867">
    <property type="entry name" value="T46867"/>
</dbReference>
<dbReference type="RefSeq" id="NP_274184.1">
    <property type="nucleotide sequence ID" value="NC_003112.2"/>
</dbReference>
<dbReference type="RefSeq" id="NP_274220.1">
    <property type="nucleotide sequence ID" value="NC_003112.2"/>
</dbReference>
<dbReference type="RefSeq" id="WP_002225211.1">
    <property type="nucleotide sequence ID" value="NC_003112.2"/>
</dbReference>
<dbReference type="SMR" id="P95370"/>
<dbReference type="FunCoup" id="P95370">
    <property type="interactions" value="222"/>
</dbReference>
<dbReference type="STRING" id="122586.NMB1156"/>
<dbReference type="PaxDb" id="122586-NMB1156"/>
<dbReference type="KEGG" id="nme:NMB1156"/>
<dbReference type="KEGG" id="nme:NMB1194"/>
<dbReference type="PATRIC" id="fig|122586.8.peg.1461"/>
<dbReference type="HOGENOM" id="CLU_011276_2_0_4"/>
<dbReference type="InParanoid" id="P95370"/>
<dbReference type="OrthoDB" id="9815856at2"/>
<dbReference type="UniPathway" id="UPA00148">
    <property type="reaction ID" value="UER00211"/>
</dbReference>
<dbReference type="UniPathway" id="UPA00148">
    <property type="reaction ID" value="UER00222"/>
</dbReference>
<dbReference type="UniPathway" id="UPA00262">
    <property type="reaction ID" value="UER00211"/>
</dbReference>
<dbReference type="UniPathway" id="UPA00262">
    <property type="reaction ID" value="UER00222"/>
</dbReference>
<dbReference type="UniPathway" id="UPA00262">
    <property type="reaction ID" value="UER00376"/>
</dbReference>
<dbReference type="Proteomes" id="UP000000425">
    <property type="component" value="Chromosome"/>
</dbReference>
<dbReference type="GO" id="GO:0051287">
    <property type="term" value="F:NAD binding"/>
    <property type="evidence" value="ECO:0007669"/>
    <property type="project" value="InterPro"/>
</dbReference>
<dbReference type="GO" id="GO:0043115">
    <property type="term" value="F:precorrin-2 dehydrogenase activity"/>
    <property type="evidence" value="ECO:0000318"/>
    <property type="project" value="GO_Central"/>
</dbReference>
<dbReference type="GO" id="GO:0051266">
    <property type="term" value="F:sirohydrochlorin ferrochelatase activity"/>
    <property type="evidence" value="ECO:0007669"/>
    <property type="project" value="UniProtKB-EC"/>
</dbReference>
<dbReference type="GO" id="GO:0004851">
    <property type="term" value="F:uroporphyrin-III C-methyltransferase activity"/>
    <property type="evidence" value="ECO:0007669"/>
    <property type="project" value="UniProtKB-UniRule"/>
</dbReference>
<dbReference type="GO" id="GO:0009236">
    <property type="term" value="P:cobalamin biosynthetic process"/>
    <property type="evidence" value="ECO:0007669"/>
    <property type="project" value="UniProtKB-UniRule"/>
</dbReference>
<dbReference type="GO" id="GO:0032259">
    <property type="term" value="P:methylation"/>
    <property type="evidence" value="ECO:0007669"/>
    <property type="project" value="UniProtKB-KW"/>
</dbReference>
<dbReference type="GO" id="GO:0019354">
    <property type="term" value="P:siroheme biosynthetic process"/>
    <property type="evidence" value="ECO:0000318"/>
    <property type="project" value="GO_Central"/>
</dbReference>
<dbReference type="CDD" id="cd11642">
    <property type="entry name" value="SUMT"/>
    <property type="match status" value="1"/>
</dbReference>
<dbReference type="FunFam" id="3.30.160.110:FF:000001">
    <property type="entry name" value="Siroheme synthase"/>
    <property type="match status" value="1"/>
</dbReference>
<dbReference type="FunFam" id="3.30.950.10:FF:000001">
    <property type="entry name" value="Siroheme synthase"/>
    <property type="match status" value="1"/>
</dbReference>
<dbReference type="FunFam" id="3.40.1010.10:FF:000001">
    <property type="entry name" value="Siroheme synthase"/>
    <property type="match status" value="1"/>
</dbReference>
<dbReference type="Gene3D" id="3.40.1010.10">
    <property type="entry name" value="Cobalt-precorrin-4 Transmethylase, Domain 1"/>
    <property type="match status" value="1"/>
</dbReference>
<dbReference type="Gene3D" id="3.30.950.10">
    <property type="entry name" value="Methyltransferase, Cobalt-precorrin-4 Transmethylase, Domain 2"/>
    <property type="match status" value="1"/>
</dbReference>
<dbReference type="Gene3D" id="3.40.50.720">
    <property type="entry name" value="NAD(P)-binding Rossmann-like Domain"/>
    <property type="match status" value="1"/>
</dbReference>
<dbReference type="Gene3D" id="1.10.8.210">
    <property type="entry name" value="Sirohaem synthase, dimerisation domain"/>
    <property type="match status" value="1"/>
</dbReference>
<dbReference type="Gene3D" id="3.30.160.110">
    <property type="entry name" value="Siroheme synthase, domain 2"/>
    <property type="match status" value="1"/>
</dbReference>
<dbReference type="HAMAP" id="MF_01646">
    <property type="entry name" value="Siroheme_synth"/>
    <property type="match status" value="1"/>
</dbReference>
<dbReference type="InterPro" id="IPR000878">
    <property type="entry name" value="4pyrrol_Mease"/>
</dbReference>
<dbReference type="InterPro" id="IPR035996">
    <property type="entry name" value="4pyrrol_Methylase_sf"/>
</dbReference>
<dbReference type="InterPro" id="IPR014777">
    <property type="entry name" value="4pyrrole_Mease_sub1"/>
</dbReference>
<dbReference type="InterPro" id="IPR014776">
    <property type="entry name" value="4pyrrole_Mease_sub2"/>
</dbReference>
<dbReference type="InterPro" id="IPR006366">
    <property type="entry name" value="CobA/CysG_C"/>
</dbReference>
<dbReference type="InterPro" id="IPR036291">
    <property type="entry name" value="NAD(P)-bd_dom_sf"/>
</dbReference>
<dbReference type="InterPro" id="IPR050161">
    <property type="entry name" value="Siro_Cobalamin_biosynth"/>
</dbReference>
<dbReference type="InterPro" id="IPR037115">
    <property type="entry name" value="Sirohaem_synt_dimer_dom_sf"/>
</dbReference>
<dbReference type="InterPro" id="IPR012409">
    <property type="entry name" value="Sirohaem_synth"/>
</dbReference>
<dbReference type="InterPro" id="IPR028281">
    <property type="entry name" value="Sirohaem_synthase_central"/>
</dbReference>
<dbReference type="InterPro" id="IPR019478">
    <property type="entry name" value="Sirohaem_synthase_dimer_dom"/>
</dbReference>
<dbReference type="InterPro" id="IPR006367">
    <property type="entry name" value="Sirohaem_synthase_N"/>
</dbReference>
<dbReference type="InterPro" id="IPR003043">
    <property type="entry name" value="Uropor_MeTrfase_CS"/>
</dbReference>
<dbReference type="NCBIfam" id="TIGR01469">
    <property type="entry name" value="cobA_cysG_Cterm"/>
    <property type="match status" value="1"/>
</dbReference>
<dbReference type="NCBIfam" id="TIGR01470">
    <property type="entry name" value="cysG_Nterm"/>
    <property type="match status" value="1"/>
</dbReference>
<dbReference type="NCBIfam" id="NF004790">
    <property type="entry name" value="PRK06136.1"/>
    <property type="match status" value="1"/>
</dbReference>
<dbReference type="NCBIfam" id="NF007922">
    <property type="entry name" value="PRK10637.1"/>
    <property type="match status" value="1"/>
</dbReference>
<dbReference type="PANTHER" id="PTHR45790:SF1">
    <property type="entry name" value="SIROHEME SYNTHASE"/>
    <property type="match status" value="1"/>
</dbReference>
<dbReference type="PANTHER" id="PTHR45790">
    <property type="entry name" value="SIROHEME SYNTHASE-RELATED"/>
    <property type="match status" value="1"/>
</dbReference>
<dbReference type="Pfam" id="PF10414">
    <property type="entry name" value="CysG_dimeriser"/>
    <property type="match status" value="1"/>
</dbReference>
<dbReference type="Pfam" id="PF13241">
    <property type="entry name" value="NAD_binding_7"/>
    <property type="match status" value="1"/>
</dbReference>
<dbReference type="Pfam" id="PF14824">
    <property type="entry name" value="Sirohm_synth_M"/>
    <property type="match status" value="1"/>
</dbReference>
<dbReference type="Pfam" id="PF00590">
    <property type="entry name" value="TP_methylase"/>
    <property type="match status" value="1"/>
</dbReference>
<dbReference type="PIRSF" id="PIRSF036426">
    <property type="entry name" value="Sirohaem_synth"/>
    <property type="match status" value="1"/>
</dbReference>
<dbReference type="SUPFAM" id="SSF51735">
    <property type="entry name" value="NAD(P)-binding Rossmann-fold domains"/>
    <property type="match status" value="1"/>
</dbReference>
<dbReference type="SUPFAM" id="SSF75615">
    <property type="entry name" value="Siroheme synthase middle domains-like"/>
    <property type="match status" value="1"/>
</dbReference>
<dbReference type="SUPFAM" id="SSF53790">
    <property type="entry name" value="Tetrapyrrole methylase"/>
    <property type="match status" value="1"/>
</dbReference>
<dbReference type="PROSITE" id="PS00839">
    <property type="entry name" value="SUMT_1"/>
    <property type="match status" value="1"/>
</dbReference>
<dbReference type="PROSITE" id="PS00840">
    <property type="entry name" value="SUMT_2"/>
    <property type="match status" value="1"/>
</dbReference>
<name>CYSG_NEIMB</name>